<gene>
    <name evidence="1" type="primary">mntP</name>
    <name type="ordered locus">CJE0162</name>
</gene>
<dbReference type="EMBL" id="CP000025">
    <property type="protein sequence ID" value="AAW34757.1"/>
    <property type="molecule type" value="Genomic_DNA"/>
</dbReference>
<dbReference type="RefSeq" id="WP_002851996.1">
    <property type="nucleotide sequence ID" value="NC_003912.7"/>
</dbReference>
<dbReference type="SMR" id="Q5HWZ9"/>
<dbReference type="KEGG" id="cjr:CJE0162"/>
<dbReference type="HOGENOM" id="CLU_096410_3_0_7"/>
<dbReference type="GO" id="GO:0005886">
    <property type="term" value="C:plasma membrane"/>
    <property type="evidence" value="ECO:0007669"/>
    <property type="project" value="UniProtKB-SubCell"/>
</dbReference>
<dbReference type="GO" id="GO:0005384">
    <property type="term" value="F:manganese ion transmembrane transporter activity"/>
    <property type="evidence" value="ECO:0007669"/>
    <property type="project" value="UniProtKB-UniRule"/>
</dbReference>
<dbReference type="HAMAP" id="MF_01521">
    <property type="entry name" value="MntP_pump"/>
    <property type="match status" value="1"/>
</dbReference>
<dbReference type="InterPro" id="IPR003810">
    <property type="entry name" value="Mntp/YtaF"/>
</dbReference>
<dbReference type="InterPro" id="IPR022929">
    <property type="entry name" value="Put_MntP"/>
</dbReference>
<dbReference type="PANTHER" id="PTHR35529">
    <property type="entry name" value="MANGANESE EFFLUX PUMP MNTP-RELATED"/>
    <property type="match status" value="1"/>
</dbReference>
<dbReference type="PANTHER" id="PTHR35529:SF1">
    <property type="entry name" value="MANGANESE EFFLUX PUMP MNTP-RELATED"/>
    <property type="match status" value="1"/>
</dbReference>
<dbReference type="Pfam" id="PF02659">
    <property type="entry name" value="Mntp"/>
    <property type="match status" value="1"/>
</dbReference>
<organism>
    <name type="scientific">Campylobacter jejuni (strain RM1221)</name>
    <dbReference type="NCBI Taxonomy" id="195099"/>
    <lineage>
        <taxon>Bacteria</taxon>
        <taxon>Pseudomonadati</taxon>
        <taxon>Campylobacterota</taxon>
        <taxon>Epsilonproteobacteria</taxon>
        <taxon>Campylobacterales</taxon>
        <taxon>Campylobacteraceae</taxon>
        <taxon>Campylobacter</taxon>
    </lineage>
</organism>
<reference key="1">
    <citation type="journal article" date="2005" name="PLoS Biol.">
        <title>Major structural differences and novel potential virulence mechanisms from the genomes of multiple Campylobacter species.</title>
        <authorList>
            <person name="Fouts D.E."/>
            <person name="Mongodin E.F."/>
            <person name="Mandrell R.E."/>
            <person name="Miller W.G."/>
            <person name="Rasko D.A."/>
            <person name="Ravel J."/>
            <person name="Brinkac L.M."/>
            <person name="DeBoy R.T."/>
            <person name="Parker C.T."/>
            <person name="Daugherty S.C."/>
            <person name="Dodson R.J."/>
            <person name="Durkin A.S."/>
            <person name="Madupu R."/>
            <person name="Sullivan S.A."/>
            <person name="Shetty J.U."/>
            <person name="Ayodeji M.A."/>
            <person name="Shvartsbeyn A."/>
            <person name="Schatz M.C."/>
            <person name="Badger J.H."/>
            <person name="Fraser C.M."/>
            <person name="Nelson K.E."/>
        </authorList>
    </citation>
    <scope>NUCLEOTIDE SEQUENCE [LARGE SCALE GENOMIC DNA]</scope>
    <source>
        <strain>RM1221</strain>
    </source>
</reference>
<name>MNTP_CAMJR</name>
<accession>Q5HWZ9</accession>
<feature type="chain" id="PRO_0000155641" description="Putative manganese efflux pump MntP">
    <location>
        <begin position="1"/>
        <end position="187"/>
    </location>
</feature>
<feature type="transmembrane region" description="Helical" evidence="1">
    <location>
        <begin position="3"/>
        <end position="23"/>
    </location>
</feature>
<feature type="transmembrane region" description="Helical" evidence="1">
    <location>
        <begin position="35"/>
        <end position="55"/>
    </location>
</feature>
<feature type="transmembrane region" description="Helical" evidence="1">
    <location>
        <begin position="56"/>
        <end position="76"/>
    </location>
</feature>
<feature type="transmembrane region" description="Helical" evidence="1">
    <location>
        <begin position="107"/>
        <end position="127"/>
    </location>
</feature>
<feature type="transmembrane region" description="Helical" evidence="1">
    <location>
        <begin position="129"/>
        <end position="149"/>
    </location>
</feature>
<feature type="transmembrane region" description="Helical" evidence="1">
    <location>
        <begin position="166"/>
        <end position="186"/>
    </location>
</feature>
<sequence>MDFYSLIFLSCALGMDAFAVSLCKGFSVKKLHLKHYLIVGIYFGGFQALMPTIGYFIGITFASFIASIDHWIAFILLSLIGLKMIKESLENENCDSNANQFGFKTMLALAIATSIDALAVGVSFAFLNVNLLLAIFLIGIITFILCIIALKIGNKFGIYLKNKAELLGGLVLIILGVKILIEHLFFD</sequence>
<protein>
    <recommendedName>
        <fullName evidence="1">Putative manganese efflux pump MntP</fullName>
    </recommendedName>
</protein>
<evidence type="ECO:0000255" key="1">
    <source>
        <dbReference type="HAMAP-Rule" id="MF_01521"/>
    </source>
</evidence>
<proteinExistence type="inferred from homology"/>
<keyword id="KW-0997">Cell inner membrane</keyword>
<keyword id="KW-1003">Cell membrane</keyword>
<keyword id="KW-0406">Ion transport</keyword>
<keyword id="KW-0464">Manganese</keyword>
<keyword id="KW-0472">Membrane</keyword>
<keyword id="KW-0812">Transmembrane</keyword>
<keyword id="KW-1133">Transmembrane helix</keyword>
<keyword id="KW-0813">Transport</keyword>
<comment type="function">
    <text evidence="1">Probably functions as a manganese efflux pump.</text>
</comment>
<comment type="subcellular location">
    <subcellularLocation>
        <location evidence="1">Cell inner membrane</location>
        <topology evidence="1">Multi-pass membrane protein</topology>
    </subcellularLocation>
</comment>
<comment type="similarity">
    <text evidence="1">Belongs to the MntP (TC 9.B.29) family.</text>
</comment>